<organism>
    <name type="scientific">Streptococcus pyogenes serotype M2 (strain MGAS10270)</name>
    <dbReference type="NCBI Taxonomy" id="370552"/>
    <lineage>
        <taxon>Bacteria</taxon>
        <taxon>Bacillati</taxon>
        <taxon>Bacillota</taxon>
        <taxon>Bacilli</taxon>
        <taxon>Lactobacillales</taxon>
        <taxon>Streptococcaceae</taxon>
        <taxon>Streptococcus</taxon>
    </lineage>
</organism>
<feature type="chain" id="PRO_0000269071" description="Small ribosomal subunit protein uS14A">
    <location>
        <begin position="1"/>
        <end position="89"/>
    </location>
</feature>
<feature type="region of interest" description="Disordered" evidence="2">
    <location>
        <begin position="34"/>
        <end position="54"/>
    </location>
</feature>
<sequence>MAKKSKIAKYQKQLQLIEQYADLRRDLKAKGDYESLRKLPRDSNPNRLKNRDKIDGRPHAYMRKFGVSRINFRDLAHKGQLPGVTKASW</sequence>
<evidence type="ECO:0000255" key="1">
    <source>
        <dbReference type="HAMAP-Rule" id="MF_00537"/>
    </source>
</evidence>
<evidence type="ECO:0000256" key="2">
    <source>
        <dbReference type="SAM" id="MobiDB-lite"/>
    </source>
</evidence>
<evidence type="ECO:0000305" key="3"/>
<proteinExistence type="inferred from homology"/>
<dbReference type="EMBL" id="CP000260">
    <property type="protein sequence ID" value="ABF34726.1"/>
    <property type="molecule type" value="Genomic_DNA"/>
</dbReference>
<dbReference type="RefSeq" id="WP_002982921.1">
    <property type="nucleotide sequence ID" value="NZ_CVUH01000011.1"/>
</dbReference>
<dbReference type="SMR" id="Q1JF33"/>
<dbReference type="GeneID" id="69900252"/>
<dbReference type="KEGG" id="sph:MGAS10270_Spy1661"/>
<dbReference type="HOGENOM" id="CLU_139869_0_0_9"/>
<dbReference type="Proteomes" id="UP000002436">
    <property type="component" value="Chromosome"/>
</dbReference>
<dbReference type="GO" id="GO:0005737">
    <property type="term" value="C:cytoplasm"/>
    <property type="evidence" value="ECO:0007669"/>
    <property type="project" value="UniProtKB-ARBA"/>
</dbReference>
<dbReference type="GO" id="GO:0015935">
    <property type="term" value="C:small ribosomal subunit"/>
    <property type="evidence" value="ECO:0007669"/>
    <property type="project" value="TreeGrafter"/>
</dbReference>
<dbReference type="GO" id="GO:0019843">
    <property type="term" value="F:rRNA binding"/>
    <property type="evidence" value="ECO:0007669"/>
    <property type="project" value="UniProtKB-UniRule"/>
</dbReference>
<dbReference type="GO" id="GO:0003735">
    <property type="term" value="F:structural constituent of ribosome"/>
    <property type="evidence" value="ECO:0007669"/>
    <property type="project" value="InterPro"/>
</dbReference>
<dbReference type="GO" id="GO:0006412">
    <property type="term" value="P:translation"/>
    <property type="evidence" value="ECO:0007669"/>
    <property type="project" value="UniProtKB-UniRule"/>
</dbReference>
<dbReference type="Gene3D" id="4.10.830.10">
    <property type="entry name" value="30s Ribosomal Protein S14, Chain N"/>
    <property type="match status" value="1"/>
</dbReference>
<dbReference type="HAMAP" id="MF_00537">
    <property type="entry name" value="Ribosomal_uS14_1"/>
    <property type="match status" value="1"/>
</dbReference>
<dbReference type="InterPro" id="IPR001209">
    <property type="entry name" value="Ribosomal_uS14"/>
</dbReference>
<dbReference type="InterPro" id="IPR023036">
    <property type="entry name" value="Ribosomal_uS14_bac/plastid"/>
</dbReference>
<dbReference type="InterPro" id="IPR043140">
    <property type="entry name" value="Ribosomal_uS14_sf"/>
</dbReference>
<dbReference type="NCBIfam" id="NF006477">
    <property type="entry name" value="PRK08881.1"/>
    <property type="match status" value="1"/>
</dbReference>
<dbReference type="PANTHER" id="PTHR19836">
    <property type="entry name" value="30S RIBOSOMAL PROTEIN S14"/>
    <property type="match status" value="1"/>
</dbReference>
<dbReference type="PANTHER" id="PTHR19836:SF19">
    <property type="entry name" value="SMALL RIBOSOMAL SUBUNIT PROTEIN US14M"/>
    <property type="match status" value="1"/>
</dbReference>
<dbReference type="Pfam" id="PF00253">
    <property type="entry name" value="Ribosomal_S14"/>
    <property type="match status" value="1"/>
</dbReference>
<dbReference type="SUPFAM" id="SSF57716">
    <property type="entry name" value="Glucocorticoid receptor-like (DNA-binding domain)"/>
    <property type="match status" value="1"/>
</dbReference>
<gene>
    <name evidence="1" type="primary">rpsN</name>
    <name type="synonym">rpsN2</name>
    <name type="ordered locus">MGAS10270_Spy1661</name>
</gene>
<reference key="1">
    <citation type="journal article" date="2006" name="Proc. Natl. Acad. Sci. U.S.A.">
        <title>Molecular genetic anatomy of inter- and intraserotype variation in the human bacterial pathogen group A Streptococcus.</title>
        <authorList>
            <person name="Beres S.B."/>
            <person name="Richter E.W."/>
            <person name="Nagiec M.J."/>
            <person name="Sumby P."/>
            <person name="Porcella S.F."/>
            <person name="DeLeo F.R."/>
            <person name="Musser J.M."/>
        </authorList>
    </citation>
    <scope>NUCLEOTIDE SEQUENCE [LARGE SCALE GENOMIC DNA]</scope>
    <source>
        <strain>MGAS10270</strain>
    </source>
</reference>
<comment type="function">
    <text evidence="1">Binds 16S rRNA, required for the assembly of 30S particles and may also be responsible for determining the conformation of the 16S rRNA at the A site.</text>
</comment>
<comment type="subunit">
    <text evidence="1">Part of the 30S ribosomal subunit. Contacts proteins S3 and S10.</text>
</comment>
<comment type="similarity">
    <text evidence="1">Belongs to the universal ribosomal protein uS14 family.</text>
</comment>
<protein>
    <recommendedName>
        <fullName evidence="1">Small ribosomal subunit protein uS14A</fullName>
    </recommendedName>
    <alternativeName>
        <fullName evidence="3">30S ribosomal protein S14</fullName>
    </alternativeName>
</protein>
<accession>Q1JF33</accession>
<keyword id="KW-0687">Ribonucleoprotein</keyword>
<keyword id="KW-0689">Ribosomal protein</keyword>
<keyword id="KW-0694">RNA-binding</keyword>
<keyword id="KW-0699">rRNA-binding</keyword>
<name>RS14_STRPD</name>